<geneLocation type="mitochondrion"/>
<proteinExistence type="inferred from homology"/>
<name>CYB_DENPO</name>
<organism>
    <name type="scientific">Dendroaspis polylepis polylepis</name>
    <name type="common">Black mamba</name>
    <dbReference type="NCBI Taxonomy" id="8620"/>
    <lineage>
        <taxon>Eukaryota</taxon>
        <taxon>Metazoa</taxon>
        <taxon>Chordata</taxon>
        <taxon>Craniata</taxon>
        <taxon>Vertebrata</taxon>
        <taxon>Euteleostomi</taxon>
        <taxon>Lepidosauria</taxon>
        <taxon>Squamata</taxon>
        <taxon>Bifurcata</taxon>
        <taxon>Unidentata</taxon>
        <taxon>Episquamata</taxon>
        <taxon>Toxicofera</taxon>
        <taxon>Serpentes</taxon>
        <taxon>Colubroidea</taxon>
        <taxon>Elapidae</taxon>
        <taxon>Elapinae</taxon>
        <taxon>Dendroaspis</taxon>
    </lineage>
</organism>
<reference key="1">
    <citation type="journal article" date="2000" name="Mol. Phylogenet. Evol.">
        <title>Phylogenetic relationships of elapid snakes based on cytochrome b mtDNA sequences.</title>
        <authorList>
            <person name="Slowinski J.B."/>
            <person name="Keogh J.S."/>
        </authorList>
    </citation>
    <scope>NUCLEOTIDE SEQUENCE [GENOMIC DNA]</scope>
</reference>
<keyword id="KW-0249">Electron transport</keyword>
<keyword id="KW-0349">Heme</keyword>
<keyword id="KW-0408">Iron</keyword>
<keyword id="KW-0472">Membrane</keyword>
<keyword id="KW-0479">Metal-binding</keyword>
<keyword id="KW-0496">Mitochondrion</keyword>
<keyword id="KW-0999">Mitochondrion inner membrane</keyword>
<keyword id="KW-0679">Respiratory chain</keyword>
<keyword id="KW-0812">Transmembrane</keyword>
<keyword id="KW-1133">Transmembrane helix</keyword>
<keyword id="KW-0813">Transport</keyword>
<keyword id="KW-0830">Ubiquinone</keyword>
<protein>
    <recommendedName>
        <fullName>Cytochrome b</fullName>
    </recommendedName>
    <alternativeName>
        <fullName>Complex III subunit 3</fullName>
    </alternativeName>
    <alternativeName>
        <fullName>Complex III subunit III</fullName>
    </alternativeName>
    <alternativeName>
        <fullName>Cytochrome b-c1 complex subunit 3</fullName>
    </alternativeName>
    <alternativeName>
        <fullName>Ubiquinol-cytochrome-c reductase complex cytochrome b subunit</fullName>
    </alternativeName>
</protein>
<comment type="function">
    <text evidence="2">Component of the ubiquinol-cytochrome c reductase complex (complex III or cytochrome b-c1 complex) that is part of the mitochondrial respiratory chain. The b-c1 complex mediates electron transfer from ubiquinol to cytochrome c. Contributes to the generation of a proton gradient across the mitochondrial membrane that is then used for ATP synthesis.</text>
</comment>
<comment type="cofactor">
    <cofactor evidence="2">
        <name>heme b</name>
        <dbReference type="ChEBI" id="CHEBI:60344"/>
    </cofactor>
    <text evidence="2">Binds 2 heme b groups non-covalently.</text>
</comment>
<comment type="subunit">
    <text evidence="2">The cytochrome bc1 complex contains 3 respiratory subunits (MT-CYB, CYC1 and UQCRFS1), 2 core proteins (UQCRC1 and UQCRC2) and probably 6 low-molecular weight proteins.</text>
</comment>
<comment type="subcellular location">
    <subcellularLocation>
        <location evidence="2">Mitochondrion inner membrane</location>
        <topology evidence="2">Multi-pass membrane protein</topology>
    </subcellularLocation>
</comment>
<comment type="miscellaneous">
    <text evidence="1">Heme 1 (or BL or b562) is low-potential and absorbs at about 562 nm, and heme 2 (or BH or b566) is high-potential and absorbs at about 566 nm.</text>
</comment>
<comment type="similarity">
    <text evidence="3 4">Belongs to the cytochrome b family.</text>
</comment>
<comment type="caution">
    <text evidence="2">The full-length protein contains only eight transmembrane helices, not nine as predicted by bioinformatics tools.</text>
</comment>
<dbReference type="EMBL" id="AF217832">
    <property type="protein sequence ID" value="AAF37251.1"/>
    <property type="molecule type" value="Genomic_DNA"/>
</dbReference>
<dbReference type="SMR" id="Q9MLJ6"/>
<dbReference type="GO" id="GO:0005743">
    <property type="term" value="C:mitochondrial inner membrane"/>
    <property type="evidence" value="ECO:0007669"/>
    <property type="project" value="UniProtKB-SubCell"/>
</dbReference>
<dbReference type="GO" id="GO:0045275">
    <property type="term" value="C:respiratory chain complex III"/>
    <property type="evidence" value="ECO:0007669"/>
    <property type="project" value="InterPro"/>
</dbReference>
<dbReference type="GO" id="GO:0046872">
    <property type="term" value="F:metal ion binding"/>
    <property type="evidence" value="ECO:0007669"/>
    <property type="project" value="UniProtKB-KW"/>
</dbReference>
<dbReference type="GO" id="GO:0008121">
    <property type="term" value="F:ubiquinol-cytochrome-c reductase activity"/>
    <property type="evidence" value="ECO:0007669"/>
    <property type="project" value="InterPro"/>
</dbReference>
<dbReference type="GO" id="GO:0006122">
    <property type="term" value="P:mitochondrial electron transport, ubiquinol to cytochrome c"/>
    <property type="evidence" value="ECO:0007669"/>
    <property type="project" value="TreeGrafter"/>
</dbReference>
<dbReference type="CDD" id="cd00290">
    <property type="entry name" value="cytochrome_b_C"/>
    <property type="match status" value="1"/>
</dbReference>
<dbReference type="CDD" id="cd00284">
    <property type="entry name" value="Cytochrome_b_N"/>
    <property type="match status" value="1"/>
</dbReference>
<dbReference type="Gene3D" id="1.20.810.10">
    <property type="entry name" value="Cytochrome Bc1 Complex, Chain C"/>
    <property type="match status" value="1"/>
</dbReference>
<dbReference type="InterPro" id="IPR005798">
    <property type="entry name" value="Cyt_b/b6_C"/>
</dbReference>
<dbReference type="InterPro" id="IPR036150">
    <property type="entry name" value="Cyt_b/b6_C_sf"/>
</dbReference>
<dbReference type="InterPro" id="IPR005797">
    <property type="entry name" value="Cyt_b/b6_N"/>
</dbReference>
<dbReference type="InterPro" id="IPR027387">
    <property type="entry name" value="Cytb/b6-like_sf"/>
</dbReference>
<dbReference type="InterPro" id="IPR030689">
    <property type="entry name" value="Cytochrome_b"/>
</dbReference>
<dbReference type="InterPro" id="IPR048260">
    <property type="entry name" value="Cytochrome_b_C_euk/bac"/>
</dbReference>
<dbReference type="InterPro" id="IPR048259">
    <property type="entry name" value="Cytochrome_b_N_euk/bac"/>
</dbReference>
<dbReference type="InterPro" id="IPR016174">
    <property type="entry name" value="Di-haem_cyt_TM"/>
</dbReference>
<dbReference type="PANTHER" id="PTHR19271">
    <property type="entry name" value="CYTOCHROME B"/>
    <property type="match status" value="1"/>
</dbReference>
<dbReference type="PANTHER" id="PTHR19271:SF16">
    <property type="entry name" value="CYTOCHROME B"/>
    <property type="match status" value="1"/>
</dbReference>
<dbReference type="Pfam" id="PF00032">
    <property type="entry name" value="Cytochrom_B_C"/>
    <property type="match status" value="1"/>
</dbReference>
<dbReference type="Pfam" id="PF00033">
    <property type="entry name" value="Cytochrome_B"/>
    <property type="match status" value="1"/>
</dbReference>
<dbReference type="PIRSF" id="PIRSF038885">
    <property type="entry name" value="COB"/>
    <property type="match status" value="1"/>
</dbReference>
<dbReference type="SUPFAM" id="SSF81648">
    <property type="entry name" value="a domain/subunit of cytochrome bc1 complex (Ubiquinol-cytochrome c reductase)"/>
    <property type="match status" value="1"/>
</dbReference>
<dbReference type="SUPFAM" id="SSF81342">
    <property type="entry name" value="Transmembrane di-heme cytochromes"/>
    <property type="match status" value="1"/>
</dbReference>
<dbReference type="PROSITE" id="PS51003">
    <property type="entry name" value="CYTB_CTER"/>
    <property type="match status" value="1"/>
</dbReference>
<dbReference type="PROSITE" id="PS51002">
    <property type="entry name" value="CYTB_NTER"/>
    <property type="match status" value="1"/>
</dbReference>
<gene>
    <name type="primary">MT-CYB</name>
    <name type="synonym">COB</name>
    <name type="synonym">CYTB</name>
    <name type="synonym">MTCYB</name>
</gene>
<sequence length="372" mass="42203">MSNQHILLTSNLLPVGSNISTWWNFGSMLLTCLILQITTGFFLAIHYTANINLAFSSVIHITRDVPHGWIMQNLHAIGASMFFICIYIHIARGLYYGLYLNKEVWLSGTALLILLMATAFFGYVLPWGQMSFWAATVITNLLTAIPYLGSALTTWLWGGFSINDPTLTRFFALHFILPFTIISMSSIHIILLHNEGSNNPLGTNPDIDKIPFHPYHSYKDMLMITIMITFMLLILSFSPDLMNDPENYSKANPLITPQHIKPEWYFLFAYGILRSIPNKLGGTLALFMSIAILMTAPFTHTSYTRSMSFRPLTQTMFWILIATFITITWTATKPVEPPFISISQVTSIIYFSFFIINPLLGWVENKLSTLNN</sequence>
<evidence type="ECO:0000250" key="1"/>
<evidence type="ECO:0000250" key="2">
    <source>
        <dbReference type="UniProtKB" id="P00157"/>
    </source>
</evidence>
<evidence type="ECO:0000255" key="3">
    <source>
        <dbReference type="PROSITE-ProRule" id="PRU00967"/>
    </source>
</evidence>
<evidence type="ECO:0000255" key="4">
    <source>
        <dbReference type="PROSITE-ProRule" id="PRU00968"/>
    </source>
</evidence>
<feature type="chain" id="PRO_0000060880" description="Cytochrome b">
    <location>
        <begin position="1"/>
        <end position="372"/>
    </location>
</feature>
<feature type="transmembrane region" description="Helical" evidence="2">
    <location>
        <begin position="25"/>
        <end position="45"/>
    </location>
</feature>
<feature type="transmembrane region" description="Helical" evidence="2">
    <location>
        <begin position="69"/>
        <end position="90"/>
    </location>
</feature>
<feature type="transmembrane region" description="Helical" evidence="2">
    <location>
        <begin position="105"/>
        <end position="125"/>
    </location>
</feature>
<feature type="transmembrane region" description="Helical" evidence="2">
    <location>
        <begin position="170"/>
        <end position="190"/>
    </location>
</feature>
<feature type="transmembrane region" description="Helical" evidence="2">
    <location>
        <begin position="218"/>
        <end position="238"/>
    </location>
</feature>
<feature type="transmembrane region" description="Helical" evidence="2">
    <location>
        <begin position="280"/>
        <end position="300"/>
    </location>
</feature>
<feature type="transmembrane region" description="Helical" evidence="2">
    <location>
        <begin position="312"/>
        <end position="332"/>
    </location>
</feature>
<feature type="transmembrane region" description="Helical" evidence="2">
    <location>
        <begin position="339"/>
        <end position="358"/>
    </location>
</feature>
<feature type="binding site" description="axial binding residue" evidence="2">
    <location>
        <position position="75"/>
    </location>
    <ligand>
        <name>heme b</name>
        <dbReference type="ChEBI" id="CHEBI:60344"/>
        <label>b562</label>
    </ligand>
    <ligandPart>
        <name>Fe</name>
        <dbReference type="ChEBI" id="CHEBI:18248"/>
    </ligandPart>
</feature>
<feature type="binding site" description="axial binding residue" evidence="2">
    <location>
        <position position="89"/>
    </location>
    <ligand>
        <name>heme b</name>
        <dbReference type="ChEBI" id="CHEBI:60344"/>
        <label>b566</label>
    </ligand>
    <ligandPart>
        <name>Fe</name>
        <dbReference type="ChEBI" id="CHEBI:18248"/>
    </ligandPart>
</feature>
<feature type="binding site" description="axial binding residue" evidence="2">
    <location>
        <position position="174"/>
    </location>
    <ligand>
        <name>heme b</name>
        <dbReference type="ChEBI" id="CHEBI:60344"/>
        <label>b562</label>
    </ligand>
    <ligandPart>
        <name>Fe</name>
        <dbReference type="ChEBI" id="CHEBI:18248"/>
    </ligandPart>
</feature>
<feature type="binding site" description="axial binding residue" evidence="2">
    <location>
        <position position="188"/>
    </location>
    <ligand>
        <name>heme b</name>
        <dbReference type="ChEBI" id="CHEBI:60344"/>
        <label>b566</label>
    </ligand>
    <ligandPart>
        <name>Fe</name>
        <dbReference type="ChEBI" id="CHEBI:18248"/>
    </ligandPart>
</feature>
<feature type="binding site" evidence="2">
    <location>
        <position position="193"/>
    </location>
    <ligand>
        <name>a ubiquinone</name>
        <dbReference type="ChEBI" id="CHEBI:16389"/>
    </ligand>
</feature>
<accession>Q9MLJ6</accession>